<name>Y1636_RHOCS</name>
<accession>B6INE1</accession>
<feature type="chain" id="PRO_1000143720" description="UPF0391 membrane protein RC1_1636">
    <location>
        <begin position="1"/>
        <end position="54"/>
    </location>
</feature>
<feature type="transmembrane region" description="Helical" evidence="1">
    <location>
        <begin position="3"/>
        <end position="23"/>
    </location>
</feature>
<feature type="transmembrane region" description="Helical" evidence="1">
    <location>
        <begin position="30"/>
        <end position="50"/>
    </location>
</feature>
<organism>
    <name type="scientific">Rhodospirillum centenum (strain ATCC 51521 / SW)</name>
    <dbReference type="NCBI Taxonomy" id="414684"/>
    <lineage>
        <taxon>Bacteria</taxon>
        <taxon>Pseudomonadati</taxon>
        <taxon>Pseudomonadota</taxon>
        <taxon>Alphaproteobacteria</taxon>
        <taxon>Rhodospirillales</taxon>
        <taxon>Rhodospirillaceae</taxon>
        <taxon>Rhodospirillum</taxon>
    </lineage>
</organism>
<gene>
    <name type="ordered locus">RC1_1636</name>
</gene>
<keyword id="KW-1003">Cell membrane</keyword>
<keyword id="KW-0472">Membrane</keyword>
<keyword id="KW-1185">Reference proteome</keyword>
<keyword id="KW-0812">Transmembrane</keyword>
<keyword id="KW-1133">Transmembrane helix</keyword>
<reference key="1">
    <citation type="submission" date="2007-03" db="EMBL/GenBank/DDBJ databases">
        <title>Genome sequence of Rhodospirillum centenum.</title>
        <authorList>
            <person name="Touchman J.W."/>
            <person name="Bauer C."/>
            <person name="Blankenship R.E."/>
        </authorList>
    </citation>
    <scope>NUCLEOTIDE SEQUENCE [LARGE SCALE GENOMIC DNA]</scope>
    <source>
        <strain>ATCC 51521 / SW</strain>
    </source>
</reference>
<protein>
    <recommendedName>
        <fullName evidence="1">UPF0391 membrane protein RC1_1636</fullName>
    </recommendedName>
</protein>
<dbReference type="EMBL" id="CP000613">
    <property type="protein sequence ID" value="ACI99038.1"/>
    <property type="molecule type" value="Genomic_DNA"/>
</dbReference>
<dbReference type="RefSeq" id="WP_012566823.1">
    <property type="nucleotide sequence ID" value="NC_011420.2"/>
</dbReference>
<dbReference type="STRING" id="414684.RC1_1636"/>
<dbReference type="KEGG" id="rce:RC1_1636"/>
<dbReference type="eggNOG" id="COG5487">
    <property type="taxonomic scope" value="Bacteria"/>
</dbReference>
<dbReference type="HOGENOM" id="CLU_187346_1_0_5"/>
<dbReference type="Proteomes" id="UP000001591">
    <property type="component" value="Chromosome"/>
</dbReference>
<dbReference type="GO" id="GO:0005886">
    <property type="term" value="C:plasma membrane"/>
    <property type="evidence" value="ECO:0007669"/>
    <property type="project" value="UniProtKB-SubCell"/>
</dbReference>
<dbReference type="HAMAP" id="MF_01361">
    <property type="entry name" value="UPF0391"/>
    <property type="match status" value="1"/>
</dbReference>
<dbReference type="InterPro" id="IPR009760">
    <property type="entry name" value="DUF1328"/>
</dbReference>
<dbReference type="NCBIfam" id="NF010226">
    <property type="entry name" value="PRK13682.1-1"/>
    <property type="match status" value="1"/>
</dbReference>
<dbReference type="NCBIfam" id="NF010228">
    <property type="entry name" value="PRK13682.1-3"/>
    <property type="match status" value="1"/>
</dbReference>
<dbReference type="NCBIfam" id="NF010229">
    <property type="entry name" value="PRK13682.1-4"/>
    <property type="match status" value="1"/>
</dbReference>
<dbReference type="NCBIfam" id="NF010233">
    <property type="entry name" value="PRK13682.2-4"/>
    <property type="match status" value="1"/>
</dbReference>
<dbReference type="NCBIfam" id="NF010234">
    <property type="entry name" value="PRK13682.2-5"/>
    <property type="match status" value="1"/>
</dbReference>
<dbReference type="Pfam" id="PF07043">
    <property type="entry name" value="DUF1328"/>
    <property type="match status" value="1"/>
</dbReference>
<dbReference type="PIRSF" id="PIRSF036466">
    <property type="entry name" value="UCP036466"/>
    <property type="match status" value="1"/>
</dbReference>
<sequence length="54" mass="5864">MLYWALIFFVVALVAGVLGFGGISSASAGIAQILFFIFLVIFVVSLIMGLVRRR</sequence>
<proteinExistence type="inferred from homology"/>
<comment type="subcellular location">
    <subcellularLocation>
        <location evidence="1">Cell membrane</location>
        <topology evidence="1">Multi-pass membrane protein</topology>
    </subcellularLocation>
</comment>
<comment type="similarity">
    <text evidence="1">Belongs to the UPF0391 family.</text>
</comment>
<evidence type="ECO:0000255" key="1">
    <source>
        <dbReference type="HAMAP-Rule" id="MF_01361"/>
    </source>
</evidence>